<protein>
    <recommendedName>
        <fullName evidence="1">Global transcriptional regulator CodY</fullName>
    </recommendedName>
</protein>
<dbReference type="EMBL" id="BA000004">
    <property type="protein sequence ID" value="BAB06181.1"/>
    <property type="molecule type" value="Genomic_DNA"/>
</dbReference>
<dbReference type="PIR" id="F83957">
    <property type="entry name" value="F83957"/>
</dbReference>
<dbReference type="RefSeq" id="WP_010898615.1">
    <property type="nucleotide sequence ID" value="NC_002570.2"/>
</dbReference>
<dbReference type="SMR" id="Q9KA28"/>
<dbReference type="STRING" id="272558.gene:10728360"/>
<dbReference type="GeneID" id="87597983"/>
<dbReference type="KEGG" id="bha:BH2462"/>
<dbReference type="eggNOG" id="COG4465">
    <property type="taxonomic scope" value="Bacteria"/>
</dbReference>
<dbReference type="HOGENOM" id="CLU_089581_0_0_9"/>
<dbReference type="OrthoDB" id="2056at2"/>
<dbReference type="Proteomes" id="UP000001258">
    <property type="component" value="Chromosome"/>
</dbReference>
<dbReference type="GO" id="GO:0005737">
    <property type="term" value="C:cytoplasm"/>
    <property type="evidence" value="ECO:0007669"/>
    <property type="project" value="UniProtKB-SubCell"/>
</dbReference>
<dbReference type="GO" id="GO:0003677">
    <property type="term" value="F:DNA binding"/>
    <property type="evidence" value="ECO:0007669"/>
    <property type="project" value="UniProtKB-UniRule"/>
</dbReference>
<dbReference type="GO" id="GO:0003700">
    <property type="term" value="F:DNA-binding transcription factor activity"/>
    <property type="evidence" value="ECO:0007669"/>
    <property type="project" value="InterPro"/>
</dbReference>
<dbReference type="GO" id="GO:0005525">
    <property type="term" value="F:GTP binding"/>
    <property type="evidence" value="ECO:0007669"/>
    <property type="project" value="InterPro"/>
</dbReference>
<dbReference type="GO" id="GO:0045892">
    <property type="term" value="P:negative regulation of DNA-templated transcription"/>
    <property type="evidence" value="ECO:0007669"/>
    <property type="project" value="UniProtKB-UniRule"/>
</dbReference>
<dbReference type="FunFam" id="1.10.10.10:FF:000034">
    <property type="entry name" value="GTP-sensing transcriptional pleiotropic repressor CodY"/>
    <property type="match status" value="1"/>
</dbReference>
<dbReference type="FunFam" id="3.30.450.40:FF:000003">
    <property type="entry name" value="GTP-sensing transcriptional pleiotropic repressor CodY"/>
    <property type="match status" value="1"/>
</dbReference>
<dbReference type="Gene3D" id="3.30.450.40">
    <property type="match status" value="1"/>
</dbReference>
<dbReference type="Gene3D" id="1.10.10.10">
    <property type="entry name" value="Winged helix-like DNA-binding domain superfamily/Winged helix DNA-binding domain"/>
    <property type="match status" value="1"/>
</dbReference>
<dbReference type="HAMAP" id="MF_00621">
    <property type="entry name" value="HTH_type_CodY"/>
    <property type="match status" value="1"/>
</dbReference>
<dbReference type="InterPro" id="IPR014154">
    <property type="entry name" value="CodY"/>
</dbReference>
<dbReference type="InterPro" id="IPR029016">
    <property type="entry name" value="GAF-like_dom_sf"/>
</dbReference>
<dbReference type="InterPro" id="IPR013198">
    <property type="entry name" value="GTP_trans_reg_CodY_C"/>
</dbReference>
<dbReference type="InterPro" id="IPR010312">
    <property type="entry name" value="Transc_reg_CodY_N"/>
</dbReference>
<dbReference type="InterPro" id="IPR036388">
    <property type="entry name" value="WH-like_DNA-bd_sf"/>
</dbReference>
<dbReference type="InterPro" id="IPR036390">
    <property type="entry name" value="WH_DNA-bd_sf"/>
</dbReference>
<dbReference type="NCBIfam" id="TIGR02787">
    <property type="entry name" value="codY_Gpos"/>
    <property type="match status" value="1"/>
</dbReference>
<dbReference type="NCBIfam" id="NF003170">
    <property type="entry name" value="PRK04158.1"/>
    <property type="match status" value="1"/>
</dbReference>
<dbReference type="PANTHER" id="PTHR40062:SF1">
    <property type="entry name" value="GLOBAL TRANSCRIPTIONAL REGULATOR CODY"/>
    <property type="match status" value="1"/>
</dbReference>
<dbReference type="PANTHER" id="PTHR40062">
    <property type="entry name" value="GTP-SENSING TRANSCRIPTIONAL PLEIOTROPIC REPRESSOR CODY"/>
    <property type="match status" value="1"/>
</dbReference>
<dbReference type="Pfam" id="PF06018">
    <property type="entry name" value="CodY"/>
    <property type="match status" value="1"/>
</dbReference>
<dbReference type="Pfam" id="PF08222">
    <property type="entry name" value="HTH_CodY"/>
    <property type="match status" value="1"/>
</dbReference>
<dbReference type="PIRSF" id="PIRSF011572">
    <property type="entry name" value="GTP_sensing_CodY"/>
    <property type="match status" value="1"/>
</dbReference>
<dbReference type="SUPFAM" id="SSF46785">
    <property type="entry name" value="Winged helix' DNA-binding domain"/>
    <property type="match status" value="1"/>
</dbReference>
<accession>Q9KA28</accession>
<proteinExistence type="inferred from homology"/>
<reference key="1">
    <citation type="journal article" date="2000" name="Nucleic Acids Res.">
        <title>Complete genome sequence of the alkaliphilic bacterium Bacillus halodurans and genomic sequence comparison with Bacillus subtilis.</title>
        <authorList>
            <person name="Takami H."/>
            <person name="Nakasone K."/>
            <person name="Takaki Y."/>
            <person name="Maeno G."/>
            <person name="Sasaki R."/>
            <person name="Masui N."/>
            <person name="Fuji F."/>
            <person name="Hirama C."/>
            <person name="Nakamura Y."/>
            <person name="Ogasawara N."/>
            <person name="Kuhara S."/>
            <person name="Horikoshi K."/>
        </authorList>
    </citation>
    <scope>NUCLEOTIDE SEQUENCE [LARGE SCALE GENOMIC DNA]</scope>
    <source>
        <strain>ATCC BAA-125 / DSM 18197 / FERM 7344 / JCM 9153 / C-125</strain>
    </source>
</reference>
<comment type="function">
    <text evidence="1">DNA-binding global transcriptional regulator which is involved in the adaptive response to starvation and acts by directly or indirectly controlling the expression of numerous genes in response to nutrient availability. During rapid exponential growth, CodY is highly active and represses genes whose products allow adaptation to nutrient depletion.</text>
</comment>
<comment type="subcellular location">
    <subcellularLocation>
        <location evidence="1">Cytoplasm</location>
    </subcellularLocation>
</comment>
<comment type="similarity">
    <text evidence="1">Belongs to the CodY family.</text>
</comment>
<evidence type="ECO:0000255" key="1">
    <source>
        <dbReference type="HAMAP-Rule" id="MF_00621"/>
    </source>
</evidence>
<organism>
    <name type="scientific">Halalkalibacterium halodurans (strain ATCC BAA-125 / DSM 18197 / FERM 7344 / JCM 9153 / C-125)</name>
    <name type="common">Bacillus halodurans</name>
    <dbReference type="NCBI Taxonomy" id="272558"/>
    <lineage>
        <taxon>Bacteria</taxon>
        <taxon>Bacillati</taxon>
        <taxon>Bacillota</taxon>
        <taxon>Bacilli</taxon>
        <taxon>Bacillales</taxon>
        <taxon>Bacillaceae</taxon>
        <taxon>Halalkalibacterium (ex Joshi et al. 2022)</taxon>
    </lineage>
</organism>
<keyword id="KW-0963">Cytoplasm</keyword>
<keyword id="KW-0238">DNA-binding</keyword>
<keyword id="KW-0597">Phosphoprotein</keyword>
<keyword id="KW-1185">Reference proteome</keyword>
<keyword id="KW-0678">Repressor</keyword>
<keyword id="KW-0804">Transcription</keyword>
<keyword id="KW-0805">Transcription regulation</keyword>
<name>CODY_HALH5</name>
<sequence>MSLLSRMRKINDMLQKSGVQHVNFREMAETLRDVISANIFVVSRRGKLLGFAIKQEIENERMKKMLEDRQFPEEYTTGLFKVEETSANLDINSEFTAFPVENKELFKTGLTTIVPISGGGQRLGTLILARLNDSFNDDDLILAEYGATVVGMEILHEKTQEIEEEARSKAVVQMAISSLSYSELEAVEHIFEELDGKEGLLVASKIADRVGITRSVIVNALRKLESAGVIESRSLGMKGTYIKVLNDKFLVELEKIKAS</sequence>
<feature type="chain" id="PRO_0000213217" description="Global transcriptional regulator CodY">
    <location>
        <begin position="1"/>
        <end position="259"/>
    </location>
</feature>
<feature type="DNA-binding region" description="H-T-H motif" evidence="1">
    <location>
        <begin position="203"/>
        <end position="222"/>
    </location>
</feature>
<feature type="region of interest" description="GAF domain" evidence="1">
    <location>
        <begin position="1"/>
        <end position="155"/>
    </location>
</feature>
<feature type="modified residue" description="Phosphoserine" evidence="1">
    <location>
        <position position="215"/>
    </location>
</feature>
<gene>
    <name evidence="1" type="primary">codY</name>
    <name type="ordered locus">BH2462</name>
</gene>